<keyword id="KW-1185">Reference proteome</keyword>
<keyword id="KW-0833">Ubl conjugation pathway</keyword>
<organism>
    <name type="scientific">Aspergillus terreus (strain NIH 2624 / FGSC A1156)</name>
    <dbReference type="NCBI Taxonomy" id="341663"/>
    <lineage>
        <taxon>Eukaryota</taxon>
        <taxon>Fungi</taxon>
        <taxon>Dikarya</taxon>
        <taxon>Ascomycota</taxon>
        <taxon>Pezizomycotina</taxon>
        <taxon>Eurotiomycetes</taxon>
        <taxon>Eurotiomycetidae</taxon>
        <taxon>Eurotiales</taxon>
        <taxon>Aspergillaceae</taxon>
        <taxon>Aspergillus</taxon>
        <taxon>Aspergillus subgen. Circumdati</taxon>
    </lineage>
</organism>
<reference key="1">
    <citation type="submission" date="2005-09" db="EMBL/GenBank/DDBJ databases">
        <title>Annotation of the Aspergillus terreus NIH2624 genome.</title>
        <authorList>
            <person name="Birren B.W."/>
            <person name="Lander E.S."/>
            <person name="Galagan J.E."/>
            <person name="Nusbaum C."/>
            <person name="Devon K."/>
            <person name="Henn M."/>
            <person name="Ma L.-J."/>
            <person name="Jaffe D.B."/>
            <person name="Butler J."/>
            <person name="Alvarez P."/>
            <person name="Gnerre S."/>
            <person name="Grabherr M."/>
            <person name="Kleber M."/>
            <person name="Mauceli E.W."/>
            <person name="Brockman W."/>
            <person name="Rounsley S."/>
            <person name="Young S.K."/>
            <person name="LaButti K."/>
            <person name="Pushparaj V."/>
            <person name="DeCaprio D."/>
            <person name="Crawford M."/>
            <person name="Koehrsen M."/>
            <person name="Engels R."/>
            <person name="Montgomery P."/>
            <person name="Pearson M."/>
            <person name="Howarth C."/>
            <person name="Larson L."/>
            <person name="Luoma S."/>
            <person name="White J."/>
            <person name="Alvarado L."/>
            <person name="Kodira C.D."/>
            <person name="Zeng Q."/>
            <person name="Oleary S."/>
            <person name="Yandava C."/>
            <person name="Denning D.W."/>
            <person name="Nierman W.C."/>
            <person name="Milne T."/>
            <person name="Madden K."/>
        </authorList>
    </citation>
    <scope>NUCLEOTIDE SEQUENCE [LARGE SCALE GENOMIC DNA]</scope>
    <source>
        <strain>NIH 2624 / FGSC A1156</strain>
    </source>
</reference>
<feature type="chain" id="PRO_0000397265" description="E3 ubiquitin ligase complex SCF subunit sconC">
    <location>
        <begin position="1"/>
        <end position="161"/>
    </location>
</feature>
<feature type="region of interest" description="Interaction with the F-box domain of F-box proteins" evidence="1">
    <location>
        <begin position="103"/>
        <end position="161"/>
    </location>
</feature>
<comment type="function">
    <text evidence="1">Essential component of the SCF (SKP1-CUL1-F-box protein) E3 ubiquitin ligase complexes, which mediate the ubiquitination and subsequent proteasomal degradation of target proteins. Controls sulfur metabolite repression, probably by mediating the inactivation or degradation of the metR transcription factor (By similarity).</text>
</comment>
<comment type="pathway">
    <text>Protein modification; protein ubiquitination.</text>
</comment>
<comment type="subunit">
    <text evidence="1">Component of the SCF (SKP1-CUL1-F-box protein) E3 ubiquitin ligase complexes.</text>
</comment>
<comment type="similarity">
    <text evidence="2">Belongs to the SKP1 family.</text>
</comment>
<evidence type="ECO:0000250" key="1"/>
<evidence type="ECO:0000305" key="2"/>
<sequence>MSTSPTLVFTSSDGVDITVDRDVAERSLLIKNMLEDLGETGEAIPIPNVNEAVLKKVIEWCTHHKNDPPSTGDDDDSRRKTTDIDEWDQKFMQVDQEMLFEIILAANYLDIKGLLDVGCKTVANMIKGKSPEEIRKTFNIQNDFTPEEEDQIRRENEWAEE</sequence>
<gene>
    <name type="primary">sconC</name>
    <name type="synonym">skpA</name>
    <name type="ORF">ATEG_09425</name>
</gene>
<dbReference type="EMBL" id="CH476607">
    <property type="protein sequence ID" value="EAU30562.1"/>
    <property type="molecule type" value="Genomic_DNA"/>
</dbReference>
<dbReference type="RefSeq" id="XP_001218047.1">
    <property type="nucleotide sequence ID" value="XM_001218046.1"/>
</dbReference>
<dbReference type="SMR" id="Q0CA59"/>
<dbReference type="STRING" id="341663.Q0CA59"/>
<dbReference type="EnsemblFungi" id="EAU30562">
    <property type="protein sequence ID" value="EAU30562"/>
    <property type="gene ID" value="ATEG_09425"/>
</dbReference>
<dbReference type="GeneID" id="4353802"/>
<dbReference type="VEuPathDB" id="FungiDB:ATEG_09425"/>
<dbReference type="eggNOG" id="KOG1724">
    <property type="taxonomic scope" value="Eukaryota"/>
</dbReference>
<dbReference type="HOGENOM" id="CLU_059252_4_0_1"/>
<dbReference type="OMA" id="DKYTASM"/>
<dbReference type="OrthoDB" id="2342932at2759"/>
<dbReference type="UniPathway" id="UPA00143"/>
<dbReference type="Proteomes" id="UP000007963">
    <property type="component" value="Unassembled WGS sequence"/>
</dbReference>
<dbReference type="GO" id="GO:0031518">
    <property type="term" value="C:CBF3 complex"/>
    <property type="evidence" value="ECO:0007669"/>
    <property type="project" value="EnsemblFungi"/>
</dbReference>
<dbReference type="GO" id="GO:0000776">
    <property type="term" value="C:kinetochore"/>
    <property type="evidence" value="ECO:0007669"/>
    <property type="project" value="EnsemblFungi"/>
</dbReference>
<dbReference type="GO" id="GO:0043224">
    <property type="term" value="C:nuclear SCF ubiquitin ligase complex"/>
    <property type="evidence" value="ECO:0007669"/>
    <property type="project" value="EnsemblFungi"/>
</dbReference>
<dbReference type="GO" id="GO:0043291">
    <property type="term" value="C:RAVE complex"/>
    <property type="evidence" value="ECO:0007669"/>
    <property type="project" value="EnsemblFungi"/>
</dbReference>
<dbReference type="GO" id="GO:0017117">
    <property type="term" value="C:single-stranded DNA-dependent ATP-dependent DNA helicase complex"/>
    <property type="evidence" value="ECO:0007669"/>
    <property type="project" value="EnsemblFungi"/>
</dbReference>
<dbReference type="GO" id="GO:0003688">
    <property type="term" value="F:DNA replication origin binding"/>
    <property type="evidence" value="ECO:0007669"/>
    <property type="project" value="EnsemblFungi"/>
</dbReference>
<dbReference type="GO" id="GO:0061630">
    <property type="term" value="F:ubiquitin protein ligase activity"/>
    <property type="evidence" value="ECO:0007669"/>
    <property type="project" value="EnsemblFungi"/>
</dbReference>
<dbReference type="GO" id="GO:0010458">
    <property type="term" value="P:exit from mitosis"/>
    <property type="evidence" value="ECO:0007669"/>
    <property type="project" value="EnsemblFungi"/>
</dbReference>
<dbReference type="GO" id="GO:0000082">
    <property type="term" value="P:G1/S transition of mitotic cell cycle"/>
    <property type="evidence" value="ECO:0007669"/>
    <property type="project" value="EnsemblFungi"/>
</dbReference>
<dbReference type="GO" id="GO:0000086">
    <property type="term" value="P:G2/M transition of mitotic cell cycle"/>
    <property type="evidence" value="ECO:0007669"/>
    <property type="project" value="EnsemblFungi"/>
</dbReference>
<dbReference type="GO" id="GO:0051382">
    <property type="term" value="P:kinetochore assembly"/>
    <property type="evidence" value="ECO:0007669"/>
    <property type="project" value="EnsemblFungi"/>
</dbReference>
<dbReference type="GO" id="GO:0101026">
    <property type="term" value="P:mitotic nuclear membrane biogenesis"/>
    <property type="evidence" value="ECO:0007669"/>
    <property type="project" value="EnsemblFungi"/>
</dbReference>
<dbReference type="GO" id="GO:2000766">
    <property type="term" value="P:negative regulation of cytoplasmic translation"/>
    <property type="evidence" value="ECO:0007669"/>
    <property type="project" value="EnsemblFungi"/>
</dbReference>
<dbReference type="GO" id="GO:0045841">
    <property type="term" value="P:negative regulation of mitotic metaphase/anaphase transition"/>
    <property type="evidence" value="ECO:0007669"/>
    <property type="project" value="EnsemblFungi"/>
</dbReference>
<dbReference type="GO" id="GO:0010828">
    <property type="term" value="P:positive regulation of D-glucose transmembrane transport"/>
    <property type="evidence" value="ECO:0007669"/>
    <property type="project" value="EnsemblFungi"/>
</dbReference>
<dbReference type="GO" id="GO:0045116">
    <property type="term" value="P:protein neddylation"/>
    <property type="evidence" value="ECO:0007669"/>
    <property type="project" value="EnsemblFungi"/>
</dbReference>
<dbReference type="GO" id="GO:0016567">
    <property type="term" value="P:protein ubiquitination"/>
    <property type="evidence" value="ECO:0007669"/>
    <property type="project" value="UniProtKB-UniPathway"/>
</dbReference>
<dbReference type="GO" id="GO:0000018">
    <property type="term" value="P:regulation of DNA recombination"/>
    <property type="evidence" value="ECO:0007669"/>
    <property type="project" value="EnsemblFungi"/>
</dbReference>
<dbReference type="GO" id="GO:0007096">
    <property type="term" value="P:regulation of exit from mitosis"/>
    <property type="evidence" value="ECO:0007669"/>
    <property type="project" value="EnsemblFungi"/>
</dbReference>
<dbReference type="GO" id="GO:0043254">
    <property type="term" value="P:regulation of protein-containing complex assembly"/>
    <property type="evidence" value="ECO:0007669"/>
    <property type="project" value="EnsemblFungi"/>
</dbReference>
<dbReference type="GO" id="GO:0000712">
    <property type="term" value="P:resolution of meiotic recombination intermediates"/>
    <property type="evidence" value="ECO:0007669"/>
    <property type="project" value="EnsemblFungi"/>
</dbReference>
<dbReference type="GO" id="GO:0031146">
    <property type="term" value="P:SCF-dependent proteasomal ubiquitin-dependent protein catabolic process"/>
    <property type="evidence" value="ECO:0007669"/>
    <property type="project" value="EnsemblFungi"/>
</dbReference>
<dbReference type="GO" id="GO:0000921">
    <property type="term" value="P:septin ring assembly"/>
    <property type="evidence" value="ECO:0007669"/>
    <property type="project" value="EnsemblFungi"/>
</dbReference>
<dbReference type="GO" id="GO:0030466">
    <property type="term" value="P:silent mating-type cassette heterochromatin formation"/>
    <property type="evidence" value="ECO:0007669"/>
    <property type="project" value="EnsemblFungi"/>
</dbReference>
<dbReference type="GO" id="GO:0007035">
    <property type="term" value="P:vacuolar acidification"/>
    <property type="evidence" value="ECO:0007669"/>
    <property type="project" value="EnsemblFungi"/>
</dbReference>
<dbReference type="GO" id="GO:0070072">
    <property type="term" value="P:vacuolar proton-transporting V-type ATPase complex assembly"/>
    <property type="evidence" value="ECO:0007669"/>
    <property type="project" value="EnsemblFungi"/>
</dbReference>
<dbReference type="CDD" id="cd18322">
    <property type="entry name" value="BTB_POZ_SKP1"/>
    <property type="match status" value="1"/>
</dbReference>
<dbReference type="FunFam" id="3.30.710.10:FF:000026">
    <property type="entry name" value="E3 ubiquitin ligase complex SCF subunit"/>
    <property type="match status" value="1"/>
</dbReference>
<dbReference type="Gene3D" id="3.30.710.10">
    <property type="entry name" value="Potassium Channel Kv1.1, Chain A"/>
    <property type="match status" value="1"/>
</dbReference>
<dbReference type="InterPro" id="IPR016897">
    <property type="entry name" value="SKP1"/>
</dbReference>
<dbReference type="InterPro" id="IPR001232">
    <property type="entry name" value="SKP1-like"/>
</dbReference>
<dbReference type="InterPro" id="IPR036296">
    <property type="entry name" value="SKP1-like_dim_sf"/>
</dbReference>
<dbReference type="InterPro" id="IPR011333">
    <property type="entry name" value="SKP1/BTB/POZ_sf"/>
</dbReference>
<dbReference type="InterPro" id="IPR016072">
    <property type="entry name" value="Skp1_comp_dimer"/>
</dbReference>
<dbReference type="InterPro" id="IPR016073">
    <property type="entry name" value="Skp1_comp_POZ"/>
</dbReference>
<dbReference type="PANTHER" id="PTHR11165">
    <property type="entry name" value="SKP1"/>
    <property type="match status" value="1"/>
</dbReference>
<dbReference type="Pfam" id="PF01466">
    <property type="entry name" value="Skp1"/>
    <property type="match status" value="1"/>
</dbReference>
<dbReference type="Pfam" id="PF03931">
    <property type="entry name" value="Skp1_POZ"/>
    <property type="match status" value="1"/>
</dbReference>
<dbReference type="PIRSF" id="PIRSF028729">
    <property type="entry name" value="E3_ubiquit_lig_SCF_Skp"/>
    <property type="match status" value="1"/>
</dbReference>
<dbReference type="SMART" id="SM00512">
    <property type="entry name" value="Skp1"/>
    <property type="match status" value="1"/>
</dbReference>
<dbReference type="SUPFAM" id="SSF54695">
    <property type="entry name" value="POZ domain"/>
    <property type="match status" value="1"/>
</dbReference>
<dbReference type="SUPFAM" id="SSF81382">
    <property type="entry name" value="Skp1 dimerisation domain-like"/>
    <property type="match status" value="1"/>
</dbReference>
<protein>
    <recommendedName>
        <fullName>E3 ubiquitin ligase complex SCF subunit sconC</fullName>
    </recommendedName>
    <alternativeName>
        <fullName>Sulfur controller C</fullName>
    </alternativeName>
    <alternativeName>
        <fullName>Sulfur metabolite repression control protein C</fullName>
    </alternativeName>
</protein>
<name>SKP1_ASPTN</name>
<proteinExistence type="inferred from homology"/>
<accession>Q0CA59</accession>